<feature type="chain" id="PRO_0000325313" description="Lipoyl synthase">
    <location>
        <begin position="1"/>
        <end position="306"/>
    </location>
</feature>
<feature type="domain" description="Radical SAM core" evidence="2">
    <location>
        <begin position="54"/>
        <end position="270"/>
    </location>
</feature>
<feature type="region of interest" description="Disordered" evidence="3">
    <location>
        <begin position="283"/>
        <end position="306"/>
    </location>
</feature>
<feature type="binding site" evidence="1">
    <location>
        <position position="41"/>
    </location>
    <ligand>
        <name>[4Fe-4S] cluster</name>
        <dbReference type="ChEBI" id="CHEBI:49883"/>
        <label>1</label>
    </ligand>
</feature>
<feature type="binding site" evidence="1">
    <location>
        <position position="46"/>
    </location>
    <ligand>
        <name>[4Fe-4S] cluster</name>
        <dbReference type="ChEBI" id="CHEBI:49883"/>
        <label>1</label>
    </ligand>
</feature>
<feature type="binding site" evidence="1">
    <location>
        <position position="52"/>
    </location>
    <ligand>
        <name>[4Fe-4S] cluster</name>
        <dbReference type="ChEBI" id="CHEBI:49883"/>
        <label>1</label>
    </ligand>
</feature>
<feature type="binding site" evidence="1">
    <location>
        <position position="68"/>
    </location>
    <ligand>
        <name>[4Fe-4S] cluster</name>
        <dbReference type="ChEBI" id="CHEBI:49883"/>
        <label>2</label>
        <note>4Fe-4S-S-AdoMet</note>
    </ligand>
</feature>
<feature type="binding site" evidence="1">
    <location>
        <position position="72"/>
    </location>
    <ligand>
        <name>[4Fe-4S] cluster</name>
        <dbReference type="ChEBI" id="CHEBI:49883"/>
        <label>2</label>
        <note>4Fe-4S-S-AdoMet</note>
    </ligand>
</feature>
<feature type="binding site" evidence="1">
    <location>
        <position position="75"/>
    </location>
    <ligand>
        <name>[4Fe-4S] cluster</name>
        <dbReference type="ChEBI" id="CHEBI:49883"/>
        <label>2</label>
        <note>4Fe-4S-S-AdoMet</note>
    </ligand>
</feature>
<feature type="binding site" evidence="1">
    <location>
        <position position="281"/>
    </location>
    <ligand>
        <name>[4Fe-4S] cluster</name>
        <dbReference type="ChEBI" id="CHEBI:49883"/>
        <label>1</label>
    </ligand>
</feature>
<sequence>MATKNEEILRKPDWLKIKLNTNENYIGLKKMMREKNLHTVCEEAKCPNIHECWGARRTATFMILGAVCTRACRFCAVKTGLPNELDLNEPERVAESVELMNLKHVVITAVARDDLRDAGSNVYAETVRKVRERNPFTTIEILPSDMGGDYEALETLMASKPDILNHNIETVRRLTPRVRARATYERTLEFLRRSKELQPDIPTKSSLMVGLGETIEEIYETMDDLRANDVDILTIGQYLQPSRKHLKVEKYYTPLEFGKLRKVAMDKGFKHCEAGPMVRSSYHADEQVNEAAKEKHRLGEEKLQQN</sequence>
<keyword id="KW-0004">4Fe-4S</keyword>
<keyword id="KW-0963">Cytoplasm</keyword>
<keyword id="KW-0408">Iron</keyword>
<keyword id="KW-0411">Iron-sulfur</keyword>
<keyword id="KW-0479">Metal-binding</keyword>
<keyword id="KW-0949">S-adenosyl-L-methionine</keyword>
<keyword id="KW-0808">Transferase</keyword>
<name>LIPA_STAHJ</name>
<gene>
    <name evidence="1" type="primary">lipA</name>
    <name type="ordered locus">SH2028</name>
</gene>
<accession>Q4L4T8</accession>
<proteinExistence type="inferred from homology"/>
<evidence type="ECO:0000255" key="1">
    <source>
        <dbReference type="HAMAP-Rule" id="MF_00206"/>
    </source>
</evidence>
<evidence type="ECO:0000255" key="2">
    <source>
        <dbReference type="PROSITE-ProRule" id="PRU01266"/>
    </source>
</evidence>
<evidence type="ECO:0000256" key="3">
    <source>
        <dbReference type="SAM" id="MobiDB-lite"/>
    </source>
</evidence>
<evidence type="ECO:0000305" key="4"/>
<organism>
    <name type="scientific">Staphylococcus haemolyticus (strain JCSC1435)</name>
    <dbReference type="NCBI Taxonomy" id="279808"/>
    <lineage>
        <taxon>Bacteria</taxon>
        <taxon>Bacillati</taxon>
        <taxon>Bacillota</taxon>
        <taxon>Bacilli</taxon>
        <taxon>Bacillales</taxon>
        <taxon>Staphylococcaceae</taxon>
        <taxon>Staphylococcus</taxon>
    </lineage>
</organism>
<reference key="1">
    <citation type="journal article" date="2005" name="J. Bacteriol.">
        <title>Whole-genome sequencing of Staphylococcus haemolyticus uncovers the extreme plasticity of its genome and the evolution of human-colonizing staphylococcal species.</title>
        <authorList>
            <person name="Takeuchi F."/>
            <person name="Watanabe S."/>
            <person name="Baba T."/>
            <person name="Yuzawa H."/>
            <person name="Ito T."/>
            <person name="Morimoto Y."/>
            <person name="Kuroda M."/>
            <person name="Cui L."/>
            <person name="Takahashi M."/>
            <person name="Ankai A."/>
            <person name="Baba S."/>
            <person name="Fukui S."/>
            <person name="Lee J.C."/>
            <person name="Hiramatsu K."/>
        </authorList>
    </citation>
    <scope>NUCLEOTIDE SEQUENCE [LARGE SCALE GENOMIC DNA]</scope>
    <source>
        <strain>JCSC1435</strain>
    </source>
</reference>
<protein>
    <recommendedName>
        <fullName evidence="1">Lipoyl synthase</fullName>
        <ecNumber evidence="1">2.8.1.8</ecNumber>
    </recommendedName>
    <alternativeName>
        <fullName evidence="1">Lip-syn</fullName>
        <shortName evidence="1">LS</shortName>
    </alternativeName>
    <alternativeName>
        <fullName evidence="1">Lipoate synthase</fullName>
    </alternativeName>
    <alternativeName>
        <fullName evidence="1">Lipoic acid synthase</fullName>
    </alternativeName>
    <alternativeName>
        <fullName evidence="1">Sulfur insertion protein LipA</fullName>
    </alternativeName>
</protein>
<comment type="function">
    <text evidence="1">Catalyzes the radical-mediated insertion of two sulfur atoms into the C-6 and C-8 positions of the octanoyl moiety bound to the lipoyl domains of lipoate-dependent enzymes, thereby converting the octanoylated domains into lipoylated derivatives.</text>
</comment>
<comment type="catalytic activity">
    <reaction evidence="1">
        <text>[[Fe-S] cluster scaffold protein carrying a second [4Fe-4S](2+) cluster] + N(6)-octanoyl-L-lysyl-[protein] + 2 oxidized [2Fe-2S]-[ferredoxin] + 2 S-adenosyl-L-methionine + 4 H(+) = [[Fe-S] cluster scaffold protein] + N(6)-[(R)-dihydrolipoyl]-L-lysyl-[protein] + 4 Fe(3+) + 2 hydrogen sulfide + 2 5'-deoxyadenosine + 2 L-methionine + 2 reduced [2Fe-2S]-[ferredoxin]</text>
        <dbReference type="Rhea" id="RHEA:16585"/>
        <dbReference type="Rhea" id="RHEA-COMP:9928"/>
        <dbReference type="Rhea" id="RHEA-COMP:10000"/>
        <dbReference type="Rhea" id="RHEA-COMP:10001"/>
        <dbReference type="Rhea" id="RHEA-COMP:10475"/>
        <dbReference type="Rhea" id="RHEA-COMP:14568"/>
        <dbReference type="Rhea" id="RHEA-COMP:14569"/>
        <dbReference type="ChEBI" id="CHEBI:15378"/>
        <dbReference type="ChEBI" id="CHEBI:17319"/>
        <dbReference type="ChEBI" id="CHEBI:29034"/>
        <dbReference type="ChEBI" id="CHEBI:29919"/>
        <dbReference type="ChEBI" id="CHEBI:33722"/>
        <dbReference type="ChEBI" id="CHEBI:33737"/>
        <dbReference type="ChEBI" id="CHEBI:33738"/>
        <dbReference type="ChEBI" id="CHEBI:57844"/>
        <dbReference type="ChEBI" id="CHEBI:59789"/>
        <dbReference type="ChEBI" id="CHEBI:78809"/>
        <dbReference type="ChEBI" id="CHEBI:83100"/>
        <dbReference type="EC" id="2.8.1.8"/>
    </reaction>
</comment>
<comment type="cofactor">
    <cofactor evidence="1">
        <name>[4Fe-4S] cluster</name>
        <dbReference type="ChEBI" id="CHEBI:49883"/>
    </cofactor>
    <text evidence="1">Binds 2 [4Fe-4S] clusters per subunit. One cluster is coordinated with 3 cysteines and an exchangeable S-adenosyl-L-methionine.</text>
</comment>
<comment type="pathway">
    <text evidence="1">Protein modification; protein lipoylation via endogenous pathway; protein N(6)-(lipoyl)lysine from octanoyl-[acyl-carrier-protein].</text>
</comment>
<comment type="subcellular location">
    <subcellularLocation>
        <location evidence="1">Cytoplasm</location>
    </subcellularLocation>
</comment>
<comment type="similarity">
    <text evidence="1">Belongs to the radical SAM superfamily. Lipoyl synthase family.</text>
</comment>
<comment type="sequence caution" evidence="4">
    <conflict type="erroneous initiation">
        <sequence resource="EMBL-CDS" id="BAE05337"/>
    </conflict>
</comment>
<dbReference type="EC" id="2.8.1.8" evidence="1"/>
<dbReference type="EMBL" id="AP006716">
    <property type="protein sequence ID" value="BAE05337.1"/>
    <property type="status" value="ALT_INIT"/>
    <property type="molecule type" value="Genomic_DNA"/>
</dbReference>
<dbReference type="RefSeq" id="WP_029376689.1">
    <property type="nucleotide sequence ID" value="NC_007168.1"/>
</dbReference>
<dbReference type="SMR" id="Q4L4T8"/>
<dbReference type="GeneID" id="93781386"/>
<dbReference type="KEGG" id="sha:SH2028"/>
<dbReference type="eggNOG" id="COG0320">
    <property type="taxonomic scope" value="Bacteria"/>
</dbReference>
<dbReference type="HOGENOM" id="CLU_033144_2_1_9"/>
<dbReference type="OrthoDB" id="9787898at2"/>
<dbReference type="Proteomes" id="UP000000543">
    <property type="component" value="Chromosome"/>
</dbReference>
<dbReference type="GO" id="GO:0005737">
    <property type="term" value="C:cytoplasm"/>
    <property type="evidence" value="ECO:0007669"/>
    <property type="project" value="UniProtKB-SubCell"/>
</dbReference>
<dbReference type="GO" id="GO:0051539">
    <property type="term" value="F:4 iron, 4 sulfur cluster binding"/>
    <property type="evidence" value="ECO:0007669"/>
    <property type="project" value="UniProtKB-UniRule"/>
</dbReference>
<dbReference type="GO" id="GO:0016992">
    <property type="term" value="F:lipoate synthase activity"/>
    <property type="evidence" value="ECO:0007669"/>
    <property type="project" value="UniProtKB-UniRule"/>
</dbReference>
<dbReference type="GO" id="GO:0046872">
    <property type="term" value="F:metal ion binding"/>
    <property type="evidence" value="ECO:0007669"/>
    <property type="project" value="UniProtKB-KW"/>
</dbReference>
<dbReference type="CDD" id="cd01335">
    <property type="entry name" value="Radical_SAM"/>
    <property type="match status" value="1"/>
</dbReference>
<dbReference type="FunFam" id="3.20.20.70:FF:000040">
    <property type="entry name" value="Lipoyl synthase"/>
    <property type="match status" value="1"/>
</dbReference>
<dbReference type="Gene3D" id="3.20.20.70">
    <property type="entry name" value="Aldolase class I"/>
    <property type="match status" value="1"/>
</dbReference>
<dbReference type="HAMAP" id="MF_00206">
    <property type="entry name" value="Lipoyl_synth"/>
    <property type="match status" value="1"/>
</dbReference>
<dbReference type="InterPro" id="IPR013785">
    <property type="entry name" value="Aldolase_TIM"/>
</dbReference>
<dbReference type="InterPro" id="IPR006638">
    <property type="entry name" value="Elp3/MiaA/NifB-like_rSAM"/>
</dbReference>
<dbReference type="InterPro" id="IPR031691">
    <property type="entry name" value="LIAS_N"/>
</dbReference>
<dbReference type="InterPro" id="IPR003698">
    <property type="entry name" value="Lipoyl_synth"/>
</dbReference>
<dbReference type="InterPro" id="IPR007197">
    <property type="entry name" value="rSAM"/>
</dbReference>
<dbReference type="NCBIfam" id="TIGR00510">
    <property type="entry name" value="lipA"/>
    <property type="match status" value="1"/>
</dbReference>
<dbReference type="NCBIfam" id="NF004019">
    <property type="entry name" value="PRK05481.1"/>
    <property type="match status" value="1"/>
</dbReference>
<dbReference type="NCBIfam" id="NF009544">
    <property type="entry name" value="PRK12928.1"/>
    <property type="match status" value="1"/>
</dbReference>
<dbReference type="PANTHER" id="PTHR10949">
    <property type="entry name" value="LIPOYL SYNTHASE"/>
    <property type="match status" value="1"/>
</dbReference>
<dbReference type="PANTHER" id="PTHR10949:SF0">
    <property type="entry name" value="LIPOYL SYNTHASE, MITOCHONDRIAL"/>
    <property type="match status" value="1"/>
</dbReference>
<dbReference type="Pfam" id="PF16881">
    <property type="entry name" value="LIAS_N"/>
    <property type="match status" value="1"/>
</dbReference>
<dbReference type="Pfam" id="PF04055">
    <property type="entry name" value="Radical_SAM"/>
    <property type="match status" value="1"/>
</dbReference>
<dbReference type="PIRSF" id="PIRSF005963">
    <property type="entry name" value="Lipoyl_synth"/>
    <property type="match status" value="1"/>
</dbReference>
<dbReference type="SFLD" id="SFLDF00271">
    <property type="entry name" value="lipoyl_synthase"/>
    <property type="match status" value="1"/>
</dbReference>
<dbReference type="SFLD" id="SFLDS00029">
    <property type="entry name" value="Radical_SAM"/>
    <property type="match status" value="1"/>
</dbReference>
<dbReference type="SMART" id="SM00729">
    <property type="entry name" value="Elp3"/>
    <property type="match status" value="1"/>
</dbReference>
<dbReference type="SUPFAM" id="SSF102114">
    <property type="entry name" value="Radical SAM enzymes"/>
    <property type="match status" value="1"/>
</dbReference>
<dbReference type="PROSITE" id="PS51918">
    <property type="entry name" value="RADICAL_SAM"/>
    <property type="match status" value="1"/>
</dbReference>